<feature type="chain" id="PRO_0000112072" description="Pyruvate kinase I">
    <location>
        <begin position="1"/>
        <end position="470"/>
    </location>
</feature>
<feature type="binding site" evidence="4">
    <location>
        <position position="32"/>
    </location>
    <ligand>
        <name>substrate</name>
    </ligand>
</feature>
<feature type="binding site" evidence="3">
    <location>
        <begin position="34"/>
        <end position="37"/>
    </location>
    <ligand>
        <name>ATP</name>
        <dbReference type="ChEBI" id="CHEBI:30616"/>
    </ligand>
</feature>
<feature type="binding site" evidence="4">
    <location>
        <position position="34"/>
    </location>
    <ligand>
        <name>K(+)</name>
        <dbReference type="ChEBI" id="CHEBI:29103"/>
    </ligand>
</feature>
<feature type="binding site" evidence="4">
    <location>
        <position position="36"/>
    </location>
    <ligand>
        <name>K(+)</name>
        <dbReference type="ChEBI" id="CHEBI:29103"/>
    </ligand>
</feature>
<feature type="binding site" evidence="4">
    <location>
        <position position="66"/>
    </location>
    <ligand>
        <name>K(+)</name>
        <dbReference type="ChEBI" id="CHEBI:29103"/>
    </ligand>
</feature>
<feature type="binding site" evidence="4">
    <location>
        <position position="67"/>
    </location>
    <ligand>
        <name>K(+)</name>
        <dbReference type="ChEBI" id="CHEBI:29103"/>
    </ligand>
</feature>
<feature type="binding site" evidence="3">
    <location>
        <position position="73"/>
    </location>
    <ligand>
        <name>ATP</name>
        <dbReference type="ChEBI" id="CHEBI:30616"/>
    </ligand>
</feature>
<feature type="binding site" evidence="3">
    <location>
        <position position="156"/>
    </location>
    <ligand>
        <name>ATP</name>
        <dbReference type="ChEBI" id="CHEBI:30616"/>
    </ligand>
</feature>
<feature type="binding site" evidence="4">
    <location>
        <position position="220"/>
    </location>
    <ligand>
        <name>substrate</name>
    </ligand>
</feature>
<feature type="binding site" evidence="4">
    <location>
        <position position="222"/>
    </location>
    <ligand>
        <name>Mg(2+)</name>
        <dbReference type="ChEBI" id="CHEBI:18420"/>
    </ligand>
</feature>
<feature type="binding site" evidence="4">
    <location>
        <position position="245"/>
    </location>
    <ligand>
        <name>substrate</name>
    </ligand>
</feature>
<feature type="binding site" evidence="4">
    <location>
        <position position="246"/>
    </location>
    <ligand>
        <name>Mg(2+)</name>
        <dbReference type="ChEBI" id="CHEBI:18420"/>
    </ligand>
</feature>
<feature type="binding site" evidence="4">
    <location>
        <position position="246"/>
    </location>
    <ligand>
        <name>substrate</name>
    </ligand>
</feature>
<feature type="binding site" evidence="4">
    <location>
        <position position="278"/>
    </location>
    <ligand>
        <name>substrate</name>
    </ligand>
</feature>
<feature type="site" description="Transition state stabilizer" evidence="2">
    <location>
        <position position="220"/>
    </location>
</feature>
<feature type="sequence conflict" description="In Ref. 1; CAA68205." evidence="6" ref="1">
    <original>V</original>
    <variation>C</variation>
    <location>
        <position position="142"/>
    </location>
</feature>
<organism>
    <name type="scientific">Salmonella typhimurium (strain LT2 / SGSC1412 / ATCC 700720)</name>
    <dbReference type="NCBI Taxonomy" id="99287"/>
    <lineage>
        <taxon>Bacteria</taxon>
        <taxon>Pseudomonadati</taxon>
        <taxon>Pseudomonadota</taxon>
        <taxon>Gammaproteobacteria</taxon>
        <taxon>Enterobacterales</taxon>
        <taxon>Enterobacteriaceae</taxon>
        <taxon>Salmonella</taxon>
    </lineage>
</organism>
<reference key="1">
    <citation type="journal article" date="1997" name="J. Bacteriol.">
        <title>Analysis of the boundaries of Salmonella pathogenicity island 2 and the corresponding chromosomal region of Escherichia coli K-12.</title>
        <authorList>
            <person name="Hensel M."/>
            <person name="Shea J.E."/>
            <person name="Baeumler A.J."/>
            <person name="Gleeson C."/>
            <person name="Blattner F.R."/>
            <person name="Holden D.W."/>
        </authorList>
    </citation>
    <scope>NUCLEOTIDE SEQUENCE [GENOMIC DNA]</scope>
    <source>
        <strain>LT2</strain>
    </source>
</reference>
<reference key="2">
    <citation type="journal article" date="2001" name="Nature">
        <title>Complete genome sequence of Salmonella enterica serovar Typhimurium LT2.</title>
        <authorList>
            <person name="McClelland M."/>
            <person name="Sanderson K.E."/>
            <person name="Spieth J."/>
            <person name="Clifton S.W."/>
            <person name="Latreille P."/>
            <person name="Courtney L."/>
            <person name="Porwollik S."/>
            <person name="Ali J."/>
            <person name="Dante M."/>
            <person name="Du F."/>
            <person name="Hou S."/>
            <person name="Layman D."/>
            <person name="Leonard S."/>
            <person name="Nguyen C."/>
            <person name="Scott K."/>
            <person name="Holmes A."/>
            <person name="Grewal N."/>
            <person name="Mulvaney E."/>
            <person name="Ryan E."/>
            <person name="Sun H."/>
            <person name="Florea L."/>
            <person name="Miller W."/>
            <person name="Stoneking T."/>
            <person name="Nhan M."/>
            <person name="Waterston R."/>
            <person name="Wilson R.K."/>
        </authorList>
    </citation>
    <scope>NUCLEOTIDE SEQUENCE [LARGE SCALE GENOMIC DNA]</scope>
    <source>
        <strain>LT2 / SGSC1412 / ATCC 700720</strain>
    </source>
</reference>
<reference key="3">
    <citation type="journal article" date="1987" name="Biochem. J.">
        <title>Purification and kinetic properties of pyruvate kinase isoenzymes of Salmonella typhimurium.</title>
        <authorList>
            <person name="Garcia-Olalla C."/>
            <person name="Garrido-Pertierra A."/>
        </authorList>
    </citation>
    <scope>FUNCTION</scope>
    <scope>CATALYTIC ACTIVITY</scope>
    <scope>MAGNESIUM COFACTOR</scope>
    <scope>ACTIVITY REGULATION</scope>
    <scope>BIOPHYSICOCHEMICAL PROPERTIES</scope>
    <scope>SUBUNIT</scope>
    <source>
        <strain>LT2 / SGSC1412 / ATCC 700720</strain>
    </source>
</reference>
<evidence type="ECO:0000250" key="1"/>
<evidence type="ECO:0000250" key="2">
    <source>
        <dbReference type="UniProtKB" id="P00549"/>
    </source>
</evidence>
<evidence type="ECO:0000250" key="3">
    <source>
        <dbReference type="UniProtKB" id="P14618"/>
    </source>
</evidence>
<evidence type="ECO:0000250" key="4">
    <source>
        <dbReference type="UniProtKB" id="P30613"/>
    </source>
</evidence>
<evidence type="ECO:0000269" key="5">
    <source>
    </source>
</evidence>
<evidence type="ECO:0000305" key="6"/>
<accession>P77983</accession>
<comment type="function">
    <text evidence="6">Catalyzes the formation of pyruvate in the last step of glycolysis, it is irreversible under physiological conditions. The reaction is critical for the control of metabolic flux in the second part of glycolysis.</text>
</comment>
<comment type="catalytic activity">
    <reaction evidence="5">
        <text>pyruvate + ATP = phosphoenolpyruvate + ADP + H(+)</text>
        <dbReference type="Rhea" id="RHEA:18157"/>
        <dbReference type="ChEBI" id="CHEBI:15361"/>
        <dbReference type="ChEBI" id="CHEBI:15378"/>
        <dbReference type="ChEBI" id="CHEBI:30616"/>
        <dbReference type="ChEBI" id="CHEBI:58702"/>
        <dbReference type="ChEBI" id="CHEBI:456216"/>
        <dbReference type="EC" id="2.7.1.40"/>
    </reaction>
    <physiologicalReaction direction="right-to-left" evidence="6">
        <dbReference type="Rhea" id="RHEA:18159"/>
    </physiologicalReaction>
</comment>
<comment type="cofactor">
    <cofactor evidence="5">
        <name>Mg(2+)</name>
        <dbReference type="ChEBI" id="CHEBI:18420"/>
    </cofactor>
</comment>
<comment type="cofactor">
    <cofactor evidence="1">
        <name>K(+)</name>
        <dbReference type="ChEBI" id="CHEBI:29103"/>
    </cofactor>
</comment>
<comment type="activity regulation">
    <text evidence="5">Belongs to type I PK; fructose 1,6-bisphosphate-activated.</text>
</comment>
<comment type="biophysicochemical properties">
    <kinetics>
        <KM evidence="5">0.21 mM for ADP</KM>
    </kinetics>
    <phDependence>
        <text evidence="5">Optimum pH is 4.0-6.8.</text>
    </phDependence>
</comment>
<comment type="pathway">
    <text>Carbohydrate degradation; glycolysis; pyruvate from D-glyceraldehyde 3-phosphate: step 5/5.</text>
</comment>
<comment type="subunit">
    <text evidence="5">Homotetramer.</text>
</comment>
<comment type="similarity">
    <text evidence="6">Belongs to the pyruvate kinase family.</text>
</comment>
<proteinExistence type="evidence at protein level"/>
<gene>
    <name type="primary">pykF</name>
    <name type="ordered locus">STM1378</name>
</gene>
<protein>
    <recommendedName>
        <fullName>Pyruvate kinase I</fullName>
        <ecNumber evidence="5">2.7.1.40</ecNumber>
    </recommendedName>
    <alternativeName>
        <fullName>PK-1</fullName>
    </alternativeName>
</protein>
<keyword id="KW-0021">Allosteric enzyme</keyword>
<keyword id="KW-0067">ATP-binding</keyword>
<keyword id="KW-0324">Glycolysis</keyword>
<keyword id="KW-0418">Kinase</keyword>
<keyword id="KW-0460">Magnesium</keyword>
<keyword id="KW-0479">Metal-binding</keyword>
<keyword id="KW-0547">Nucleotide-binding</keyword>
<keyword id="KW-0630">Potassium</keyword>
<keyword id="KW-0670">Pyruvate</keyword>
<keyword id="KW-1185">Reference proteome</keyword>
<keyword id="KW-0808">Transferase</keyword>
<dbReference type="EC" id="2.7.1.40" evidence="5"/>
<dbReference type="EMBL" id="X99945">
    <property type="protein sequence ID" value="CAA68205.1"/>
    <property type="molecule type" value="Genomic_DNA"/>
</dbReference>
<dbReference type="EMBL" id="AE006468">
    <property type="protein sequence ID" value="AAL20302.1"/>
    <property type="molecule type" value="Genomic_DNA"/>
</dbReference>
<dbReference type="RefSeq" id="NP_460343.1">
    <property type="nucleotide sequence ID" value="NC_003197.2"/>
</dbReference>
<dbReference type="RefSeq" id="WP_000751447.1">
    <property type="nucleotide sequence ID" value="NC_003197.2"/>
</dbReference>
<dbReference type="SMR" id="P77983"/>
<dbReference type="STRING" id="99287.STM1378"/>
<dbReference type="PaxDb" id="99287-STM1378"/>
<dbReference type="GeneID" id="1252896"/>
<dbReference type="KEGG" id="stm:STM1378"/>
<dbReference type="PATRIC" id="fig|99287.12.peg.1461"/>
<dbReference type="HOGENOM" id="CLU_015439_0_0_6"/>
<dbReference type="OMA" id="HQGRYDR"/>
<dbReference type="PhylomeDB" id="P77983"/>
<dbReference type="BioCyc" id="SENT99287:STM1378-MONOMER"/>
<dbReference type="UniPathway" id="UPA00109">
    <property type="reaction ID" value="UER00188"/>
</dbReference>
<dbReference type="Proteomes" id="UP000001014">
    <property type="component" value="Chromosome"/>
</dbReference>
<dbReference type="GO" id="GO:0005737">
    <property type="term" value="C:cytoplasm"/>
    <property type="evidence" value="ECO:0000318"/>
    <property type="project" value="GO_Central"/>
</dbReference>
<dbReference type="GO" id="GO:0005829">
    <property type="term" value="C:cytosol"/>
    <property type="evidence" value="ECO:0000318"/>
    <property type="project" value="GO_Central"/>
</dbReference>
<dbReference type="GO" id="GO:0005524">
    <property type="term" value="F:ATP binding"/>
    <property type="evidence" value="ECO:0007669"/>
    <property type="project" value="UniProtKB-KW"/>
</dbReference>
<dbReference type="GO" id="GO:0016301">
    <property type="term" value="F:kinase activity"/>
    <property type="evidence" value="ECO:0007669"/>
    <property type="project" value="UniProtKB-KW"/>
</dbReference>
<dbReference type="GO" id="GO:0000287">
    <property type="term" value="F:magnesium ion binding"/>
    <property type="evidence" value="ECO:0007669"/>
    <property type="project" value="InterPro"/>
</dbReference>
<dbReference type="GO" id="GO:0030955">
    <property type="term" value="F:potassium ion binding"/>
    <property type="evidence" value="ECO:0007669"/>
    <property type="project" value="InterPro"/>
</dbReference>
<dbReference type="GO" id="GO:0004743">
    <property type="term" value="F:pyruvate kinase activity"/>
    <property type="evidence" value="ECO:0000318"/>
    <property type="project" value="GO_Central"/>
</dbReference>
<dbReference type="GO" id="GO:0006096">
    <property type="term" value="P:glycolytic process"/>
    <property type="evidence" value="ECO:0000318"/>
    <property type="project" value="GO_Central"/>
</dbReference>
<dbReference type="CDD" id="cd00288">
    <property type="entry name" value="Pyruvate_Kinase"/>
    <property type="match status" value="1"/>
</dbReference>
<dbReference type="FunFam" id="2.40.33.10:FF:000001">
    <property type="entry name" value="Pyruvate kinase"/>
    <property type="match status" value="1"/>
</dbReference>
<dbReference type="FunFam" id="3.20.20.60:FF:000001">
    <property type="entry name" value="Pyruvate kinase"/>
    <property type="match status" value="1"/>
</dbReference>
<dbReference type="FunFam" id="3.40.1380.20:FF:000003">
    <property type="entry name" value="Pyruvate kinase"/>
    <property type="match status" value="1"/>
</dbReference>
<dbReference type="Gene3D" id="3.20.20.60">
    <property type="entry name" value="Phosphoenolpyruvate-binding domains"/>
    <property type="match status" value="1"/>
</dbReference>
<dbReference type="Gene3D" id="2.40.33.10">
    <property type="entry name" value="PK beta-barrel domain-like"/>
    <property type="match status" value="1"/>
</dbReference>
<dbReference type="Gene3D" id="3.40.1380.20">
    <property type="entry name" value="Pyruvate kinase, C-terminal domain"/>
    <property type="match status" value="1"/>
</dbReference>
<dbReference type="InterPro" id="IPR001697">
    <property type="entry name" value="Pyr_Knase"/>
</dbReference>
<dbReference type="InterPro" id="IPR015813">
    <property type="entry name" value="Pyrv/PenolPyrv_kinase-like_dom"/>
</dbReference>
<dbReference type="InterPro" id="IPR040442">
    <property type="entry name" value="Pyrv_kinase-like_dom_sf"/>
</dbReference>
<dbReference type="InterPro" id="IPR011037">
    <property type="entry name" value="Pyrv_Knase-like_insert_dom_sf"/>
</dbReference>
<dbReference type="InterPro" id="IPR018209">
    <property type="entry name" value="Pyrv_Knase_AS"/>
</dbReference>
<dbReference type="InterPro" id="IPR015793">
    <property type="entry name" value="Pyrv_Knase_brl"/>
</dbReference>
<dbReference type="InterPro" id="IPR015795">
    <property type="entry name" value="Pyrv_Knase_C"/>
</dbReference>
<dbReference type="InterPro" id="IPR036918">
    <property type="entry name" value="Pyrv_Knase_C_sf"/>
</dbReference>
<dbReference type="InterPro" id="IPR015806">
    <property type="entry name" value="Pyrv_Knase_insert_dom_sf"/>
</dbReference>
<dbReference type="NCBIfam" id="NF004491">
    <property type="entry name" value="PRK05826.1"/>
    <property type="match status" value="1"/>
</dbReference>
<dbReference type="NCBIfam" id="NF004978">
    <property type="entry name" value="PRK06354.1"/>
    <property type="match status" value="1"/>
</dbReference>
<dbReference type="NCBIfam" id="NF006664">
    <property type="entry name" value="PRK09206.1"/>
    <property type="match status" value="1"/>
</dbReference>
<dbReference type="NCBIfam" id="TIGR01064">
    <property type="entry name" value="pyruv_kin"/>
    <property type="match status" value="1"/>
</dbReference>
<dbReference type="PANTHER" id="PTHR11817">
    <property type="entry name" value="PYRUVATE KINASE"/>
    <property type="match status" value="1"/>
</dbReference>
<dbReference type="Pfam" id="PF00224">
    <property type="entry name" value="PK"/>
    <property type="match status" value="1"/>
</dbReference>
<dbReference type="Pfam" id="PF02887">
    <property type="entry name" value="PK_C"/>
    <property type="match status" value="1"/>
</dbReference>
<dbReference type="PRINTS" id="PR01050">
    <property type="entry name" value="PYRUVTKNASE"/>
</dbReference>
<dbReference type="SUPFAM" id="SSF51621">
    <property type="entry name" value="Phosphoenolpyruvate/pyruvate domain"/>
    <property type="match status" value="1"/>
</dbReference>
<dbReference type="SUPFAM" id="SSF50800">
    <property type="entry name" value="PK beta-barrel domain-like"/>
    <property type="match status" value="1"/>
</dbReference>
<dbReference type="SUPFAM" id="SSF52935">
    <property type="entry name" value="PK C-terminal domain-like"/>
    <property type="match status" value="1"/>
</dbReference>
<dbReference type="PROSITE" id="PS00110">
    <property type="entry name" value="PYRUVATE_KINASE"/>
    <property type="match status" value="1"/>
</dbReference>
<sequence length="470" mass="50657">MKKTKIVCTIGPKTESEEMLSKMLDAGMNVMRLNFSHGDYAEHGQRIQNLRNVMSKTGKKAAILLDTKGPEIRTIKLEGGNDVSLKAGQTFTFTTDKSVVGNNEIVAVTYEGFTSDLSVGNTVLVDDGLIGMEVTAIEGNKVICKVLNNGDLGENKGVNLPGVSIALPALAEKDKQDLIFGCEQGVDFVAASFIRKRSDVVEIREHLKAHGGENIQIISKIENQEGLNNFDEILEASDGIMVARGDLGVEIPVEEVIFAQKMMIEKCIRARKVVITATQMLDSMIKNPRPTRAEAGDVANAILDGTDAVMLSGESAKGKYPLEAVSIMATICERTDRVMNSRLDYNNDSRKLRITEAVCRGAVETAEKLEAPLIVVATQGGKSARAVRKYFPDATILALTTNEVTARQLVLSKGVVSQLVKEINSTDDFYRLGKDVALQSGLAQKGDVVVMVSGALVPSGTTNTASVHVL</sequence>
<name>KPYK1_SALTY</name>